<evidence type="ECO:0000250" key="1">
    <source>
        <dbReference type="UniProtKB" id="P01116"/>
    </source>
</evidence>
<evidence type="ECO:0000256" key="2">
    <source>
        <dbReference type="SAM" id="MobiDB-lite"/>
    </source>
</evidence>
<evidence type="ECO:0000303" key="3">
    <source ref="1"/>
</evidence>
<evidence type="ECO:0000305" key="4"/>
<protein>
    <recommendedName>
        <fullName>GTPase KRas</fullName>
        <ecNumber evidence="1">3.6.5.2</ecNumber>
    </recommendedName>
    <alternativeName>
        <fullName>Ki-Ras</fullName>
        <shortName>K-ras</shortName>
    </alternativeName>
</protein>
<comment type="function">
    <text evidence="1">Ras proteins bind GDP/GTP and possess intrinsic GTPase activity. Plays an important role in the regulation of cell proliferation. May play a role in promoting oncogenic events by inducing transcriptional silencing of tumor suppressor genes (TSGs).</text>
</comment>
<comment type="catalytic activity">
    <reaction evidence="1">
        <text>GTP + H2O = GDP + phosphate + H(+)</text>
        <dbReference type="Rhea" id="RHEA:19669"/>
        <dbReference type="ChEBI" id="CHEBI:15377"/>
        <dbReference type="ChEBI" id="CHEBI:15378"/>
        <dbReference type="ChEBI" id="CHEBI:37565"/>
        <dbReference type="ChEBI" id="CHEBI:43474"/>
        <dbReference type="ChEBI" id="CHEBI:58189"/>
        <dbReference type="EC" id="3.6.5.2"/>
    </reaction>
</comment>
<comment type="activity regulation">
    <text evidence="1">Alternates between an inactive form bound to GDP and an active form bound to GTP (By similarity). Activated by a guanine nucleotide-exchange factor (GEF) and inactivated by a GTPase-activating protein (GAP) (By similarity).</text>
</comment>
<comment type="subcellular location">
    <subcellularLocation>
        <location evidence="1">Cell membrane</location>
        <topology evidence="1">Lipid-anchor</topology>
        <orientation evidence="1">Cytoplasmic side</orientation>
    </subcellularLocation>
    <subcellularLocation>
        <location evidence="1">Cytoplasm</location>
    </subcellularLocation>
</comment>
<comment type="alternative products">
    <event type="alternative splicing"/>
    <isoform>
        <id>Q5EFX7-1</id>
        <name>1</name>
        <sequence type="displayed"/>
    </isoform>
    <isoform>
        <id>Q5EFX7-2</id>
        <name>2</name>
        <sequence type="described" ref="VSP_015305 VSP_015306"/>
    </isoform>
</comment>
<comment type="similarity">
    <text evidence="4">Belongs to the small GTPase superfamily. Ras family.</text>
</comment>
<reference key="1">
    <citation type="submission" date="2005-01" db="EMBL/GenBank/DDBJ databases">
        <title>Tissue-specific alternative splicing of Ki-ras gene from the self-fertilizing fish Rivulus marmoratus (Cyprinodontiformes, Rivulidae).</title>
        <authorList>
            <person name="Lee Y.-M."/>
            <person name="Park E.-H."/>
            <person name="Lee J.-S."/>
        </authorList>
    </citation>
    <scope>NUCLEOTIDE SEQUENCE [MRNA] (ISOFORMS 1 AND 2)</scope>
</reference>
<name>RASK_KRYMA</name>
<gene>
    <name type="primary">kras</name>
</gene>
<organism>
    <name type="scientific">Kryptolebias marmoratus</name>
    <name type="common">Mangrove killifish</name>
    <name type="synonym">Rivulus marmoratus</name>
    <dbReference type="NCBI Taxonomy" id="37003"/>
    <lineage>
        <taxon>Eukaryota</taxon>
        <taxon>Metazoa</taxon>
        <taxon>Chordata</taxon>
        <taxon>Craniata</taxon>
        <taxon>Vertebrata</taxon>
        <taxon>Euteleostomi</taxon>
        <taxon>Actinopterygii</taxon>
        <taxon>Neopterygii</taxon>
        <taxon>Teleostei</taxon>
        <taxon>Neoteleostei</taxon>
        <taxon>Acanthomorphata</taxon>
        <taxon>Ovalentaria</taxon>
        <taxon>Atherinomorphae</taxon>
        <taxon>Cyprinodontiformes</taxon>
        <taxon>Rivulidae</taxon>
        <taxon>Kryptolebias</taxon>
    </lineage>
</organism>
<proteinExistence type="evidence at transcript level"/>
<sequence>MTEYKLVVVGAGGVGKSALTIQLIQNHFVDEYDPTIEDSYRKQVVIDGETCLLDILDTAGQEEYSAMRDQYMRTGEGFLCVFAINNTKSFEDIHHYREQIKRVKDSEDVPMVLVGNKYDLPTRTVDTKQAQDLARSYGIPFIETSAKTRQGVDDAFYTLVREIRKHKEKMSKEGKKKKKKSKTKCILM</sequence>
<dbReference type="EC" id="3.6.5.2" evidence="1"/>
<dbReference type="EMBL" id="AY886900">
    <property type="protein sequence ID" value="AAW78851.1"/>
    <property type="molecule type" value="mRNA"/>
</dbReference>
<dbReference type="EMBL" id="AY886901">
    <property type="protein sequence ID" value="AAW78852.1"/>
    <property type="molecule type" value="mRNA"/>
</dbReference>
<dbReference type="BMRB" id="Q5EFX7"/>
<dbReference type="SMR" id="Q5EFX7"/>
<dbReference type="STRING" id="37003.ENSKMAP00000005296"/>
<dbReference type="Proteomes" id="UP000264800">
    <property type="component" value="Whole Genome Shotgun Assembly"/>
</dbReference>
<dbReference type="GO" id="GO:0005737">
    <property type="term" value="C:cytoplasm"/>
    <property type="evidence" value="ECO:0000250"/>
    <property type="project" value="UniProtKB"/>
</dbReference>
<dbReference type="GO" id="GO:0009898">
    <property type="term" value="C:cytoplasmic side of plasma membrane"/>
    <property type="evidence" value="ECO:0000250"/>
    <property type="project" value="UniProtKB"/>
</dbReference>
<dbReference type="GO" id="GO:0003925">
    <property type="term" value="F:G protein activity"/>
    <property type="evidence" value="ECO:0007669"/>
    <property type="project" value="UniProtKB-EC"/>
</dbReference>
<dbReference type="GO" id="GO:0005525">
    <property type="term" value="F:GTP binding"/>
    <property type="evidence" value="ECO:0007669"/>
    <property type="project" value="UniProtKB-KW"/>
</dbReference>
<dbReference type="GO" id="GO:0007165">
    <property type="term" value="P:signal transduction"/>
    <property type="evidence" value="ECO:0007669"/>
    <property type="project" value="InterPro"/>
</dbReference>
<dbReference type="CDD" id="cd04138">
    <property type="entry name" value="H_N_K_Ras_like"/>
    <property type="match status" value="1"/>
</dbReference>
<dbReference type="FunFam" id="3.40.50.300:FF:000096">
    <property type="entry name" value="KRAS proto-oncogene, GTPase"/>
    <property type="match status" value="1"/>
</dbReference>
<dbReference type="Gene3D" id="3.40.50.300">
    <property type="entry name" value="P-loop containing nucleotide triphosphate hydrolases"/>
    <property type="match status" value="1"/>
</dbReference>
<dbReference type="InterPro" id="IPR027417">
    <property type="entry name" value="P-loop_NTPase"/>
</dbReference>
<dbReference type="InterPro" id="IPR005225">
    <property type="entry name" value="Small_GTP-bd"/>
</dbReference>
<dbReference type="InterPro" id="IPR001806">
    <property type="entry name" value="Small_GTPase"/>
</dbReference>
<dbReference type="InterPro" id="IPR020849">
    <property type="entry name" value="Small_GTPase_Ras-type"/>
</dbReference>
<dbReference type="NCBIfam" id="TIGR00231">
    <property type="entry name" value="small_GTP"/>
    <property type="match status" value="1"/>
</dbReference>
<dbReference type="PANTHER" id="PTHR24070">
    <property type="entry name" value="RAS, DI-RAS, AND RHEB FAMILY MEMBERS OF SMALL GTPASE SUPERFAMILY"/>
    <property type="match status" value="1"/>
</dbReference>
<dbReference type="Pfam" id="PF00071">
    <property type="entry name" value="Ras"/>
    <property type="match status" value="1"/>
</dbReference>
<dbReference type="PRINTS" id="PR00449">
    <property type="entry name" value="RASTRNSFRMNG"/>
</dbReference>
<dbReference type="SMART" id="SM00175">
    <property type="entry name" value="RAB"/>
    <property type="match status" value="1"/>
</dbReference>
<dbReference type="SMART" id="SM00173">
    <property type="entry name" value="RAS"/>
    <property type="match status" value="1"/>
</dbReference>
<dbReference type="SMART" id="SM00174">
    <property type="entry name" value="RHO"/>
    <property type="match status" value="1"/>
</dbReference>
<dbReference type="SUPFAM" id="SSF52540">
    <property type="entry name" value="P-loop containing nucleoside triphosphate hydrolases"/>
    <property type="match status" value="1"/>
</dbReference>
<dbReference type="PROSITE" id="PS51421">
    <property type="entry name" value="RAS"/>
    <property type="match status" value="1"/>
</dbReference>
<feature type="chain" id="PRO_0000082648" description="GTPase KRas">
    <location>
        <begin position="1"/>
        <end position="185"/>
    </location>
</feature>
<feature type="propeptide" id="PRO_0000281298" description="Removed in mature form" evidence="1">
    <location>
        <begin position="186"/>
        <end position="188"/>
    </location>
</feature>
<feature type="region of interest" description="Disordered" evidence="2">
    <location>
        <begin position="167"/>
        <end position="188"/>
    </location>
</feature>
<feature type="short sequence motif" description="Effector region">
    <location>
        <begin position="32"/>
        <end position="40"/>
    </location>
</feature>
<feature type="binding site" evidence="1">
    <location>
        <begin position="10"/>
        <end position="18"/>
    </location>
    <ligand>
        <name>GTP</name>
        <dbReference type="ChEBI" id="CHEBI:37565"/>
    </ligand>
</feature>
<feature type="binding site" evidence="1">
    <location>
        <begin position="29"/>
        <end position="35"/>
    </location>
    <ligand>
        <name>GTP</name>
        <dbReference type="ChEBI" id="CHEBI:37565"/>
    </ligand>
</feature>
<feature type="binding site" evidence="1">
    <location>
        <begin position="59"/>
        <end position="60"/>
    </location>
    <ligand>
        <name>GTP</name>
        <dbReference type="ChEBI" id="CHEBI:37565"/>
    </ligand>
</feature>
<feature type="binding site" evidence="1">
    <location>
        <begin position="116"/>
        <end position="119"/>
    </location>
    <ligand>
        <name>GTP</name>
        <dbReference type="ChEBI" id="CHEBI:37565"/>
    </ligand>
</feature>
<feature type="modified residue" description="Cysteine methyl ester" evidence="1">
    <location>
        <position position="185"/>
    </location>
</feature>
<feature type="lipid moiety-binding region" description="S-farnesyl cysteine" evidence="1">
    <location>
        <position position="185"/>
    </location>
</feature>
<feature type="splice variant" id="VSP_015305" description="In isoform 2." evidence="3">
    <original>GVD</original>
    <variation>RVE</variation>
    <location>
        <begin position="151"/>
        <end position="153"/>
    </location>
</feature>
<feature type="splice variant" id="VSP_015306" description="In isoform 2." evidence="3">
    <original>KHKEKMSKEGKKKKKKSKTKCILM</original>
    <variation>QYRLSKISKEEKTPGCVQLKKCVVM</variation>
    <location>
        <begin position="165"/>
        <end position="188"/>
    </location>
</feature>
<accession>Q5EFX7</accession>
<accession>Q5EFX6</accession>
<keyword id="KW-0025">Alternative splicing</keyword>
<keyword id="KW-1003">Cell membrane</keyword>
<keyword id="KW-0963">Cytoplasm</keyword>
<keyword id="KW-0342">GTP-binding</keyword>
<keyword id="KW-0378">Hydrolase</keyword>
<keyword id="KW-0449">Lipoprotein</keyword>
<keyword id="KW-0472">Membrane</keyword>
<keyword id="KW-0488">Methylation</keyword>
<keyword id="KW-0547">Nucleotide-binding</keyword>
<keyword id="KW-0636">Prenylation</keyword>
<keyword id="KW-1185">Reference proteome</keyword>